<proteinExistence type="evidence at protein level"/>
<sequence>MTARGAAGRCPSSTWLGSRLLLVCLLMSRSIAKEVSEHCSHMIGNGHLKVLQQLIDSQMETSCQIAFEFVDQEQLDDPVCYLKKAFFLVQDIIDETMRFKDNTPNANATERLQELSNNLNSCFTKDYEEQNKACVRTFHETPLQLLEKIKNFFNETKNLLEKDWNIFTKNCNNSFAKCSSRDVVTKPDCNCLYPKATPSSDPASASPHQPPAPSMAPLAGLAWDDSQRTEGSSLLPSELPLRIEDPGSAKQRPPRSTCQTLESTEQPNHGDRLTEDSQPHPSAGGPVPGVEDILESSLGTNWVLEEASGEASEGFLTQEAKFSPSTPVGGSIQAETDRPRALSASPFPKSTEDQKPVDITDRPLTEVNPMRPIGQTQNNTPEKTDGTSTLREDHQEPGSPHIATPNPQRVSNSATPVAQLLLPKSHSWGIVLPLGELEGKRSTRDRRSPAELEGGSASEGAARPVARFNSIPLTDTGHVEQHEGSSDPQIPESVFHLLVPGIILVLLTVGGLLFYKWKWRSHRDPQTLDSSVGRPEDSSLTQDEDRQVELPV</sequence>
<name>CSF1_MOUSE</name>
<reference key="1">
    <citation type="journal article" date="1987" name="Nucleic Acids Res.">
        <title>Nucleotide sequence of a cDNA encoding murine CSF-1 (Macrophage-CSF).</title>
        <authorList>
            <person name="Delamarter J.F."/>
            <person name="Hession C."/>
            <person name="Semon D."/>
            <person name="Gough N.M."/>
            <person name="Rothenbuhler R."/>
            <person name="Mermod J.-J."/>
        </authorList>
    </citation>
    <scope>NUCLEOTIDE SEQUENCE [MRNA]</scope>
</reference>
<reference key="2">
    <citation type="journal article" date="1988" name="Proc. Natl. Acad. Sci. U.S.A.">
        <title>cDNA cloning and expression of murine macrophage colony-stimulating factor from L929 cells.</title>
        <authorList>
            <person name="Ladner M.B."/>
            <person name="Martin G.A."/>
            <person name="Noble J.A."/>
            <person name="Wittman V.P."/>
            <person name="Warren M.K."/>
            <person name="McGrogan M."/>
            <person name="Stanley E.R."/>
        </authorList>
    </citation>
    <scope>NUCLEOTIDE SEQUENCE [MRNA]</scope>
</reference>
<reference key="3">
    <citation type="journal article" date="1993" name="Biochim. Biophys. Acta">
        <title>Isolation and characterization of a cDNA clone encoding for rat CSF-1 gene. Post-transcriptional repression occurs in myogenic differentiation.</title>
        <authorList>
            <person name="Borycki A.G."/>
            <person name="Lenormund J."/>
            <person name="Guillier M."/>
            <person name="Leibovitch S.A."/>
        </authorList>
    </citation>
    <scope>NUCLEOTIDE SEQUENCE [MRNA]</scope>
</reference>
<reference key="4">
    <citation type="journal article" date="2005" name="Science">
        <title>The transcriptional landscape of the mammalian genome.</title>
        <authorList>
            <person name="Carninci P."/>
            <person name="Kasukawa T."/>
            <person name="Katayama S."/>
            <person name="Gough J."/>
            <person name="Frith M.C."/>
            <person name="Maeda N."/>
            <person name="Oyama R."/>
            <person name="Ravasi T."/>
            <person name="Lenhard B."/>
            <person name="Wells C."/>
            <person name="Kodzius R."/>
            <person name="Shimokawa K."/>
            <person name="Bajic V.B."/>
            <person name="Brenner S.E."/>
            <person name="Batalov S."/>
            <person name="Forrest A.R."/>
            <person name="Zavolan M."/>
            <person name="Davis M.J."/>
            <person name="Wilming L.G."/>
            <person name="Aidinis V."/>
            <person name="Allen J.E."/>
            <person name="Ambesi-Impiombato A."/>
            <person name="Apweiler R."/>
            <person name="Aturaliya R.N."/>
            <person name="Bailey T.L."/>
            <person name="Bansal M."/>
            <person name="Baxter L."/>
            <person name="Beisel K.W."/>
            <person name="Bersano T."/>
            <person name="Bono H."/>
            <person name="Chalk A.M."/>
            <person name="Chiu K.P."/>
            <person name="Choudhary V."/>
            <person name="Christoffels A."/>
            <person name="Clutterbuck D.R."/>
            <person name="Crowe M.L."/>
            <person name="Dalla E."/>
            <person name="Dalrymple B.P."/>
            <person name="de Bono B."/>
            <person name="Della Gatta G."/>
            <person name="di Bernardo D."/>
            <person name="Down T."/>
            <person name="Engstrom P."/>
            <person name="Fagiolini M."/>
            <person name="Faulkner G."/>
            <person name="Fletcher C.F."/>
            <person name="Fukushima T."/>
            <person name="Furuno M."/>
            <person name="Futaki S."/>
            <person name="Gariboldi M."/>
            <person name="Georgii-Hemming P."/>
            <person name="Gingeras T.R."/>
            <person name="Gojobori T."/>
            <person name="Green R.E."/>
            <person name="Gustincich S."/>
            <person name="Harbers M."/>
            <person name="Hayashi Y."/>
            <person name="Hensch T.K."/>
            <person name="Hirokawa N."/>
            <person name="Hill D."/>
            <person name="Huminiecki L."/>
            <person name="Iacono M."/>
            <person name="Ikeo K."/>
            <person name="Iwama A."/>
            <person name="Ishikawa T."/>
            <person name="Jakt M."/>
            <person name="Kanapin A."/>
            <person name="Katoh M."/>
            <person name="Kawasawa Y."/>
            <person name="Kelso J."/>
            <person name="Kitamura H."/>
            <person name="Kitano H."/>
            <person name="Kollias G."/>
            <person name="Krishnan S.P."/>
            <person name="Kruger A."/>
            <person name="Kummerfeld S.K."/>
            <person name="Kurochkin I.V."/>
            <person name="Lareau L.F."/>
            <person name="Lazarevic D."/>
            <person name="Lipovich L."/>
            <person name="Liu J."/>
            <person name="Liuni S."/>
            <person name="McWilliam S."/>
            <person name="Madan Babu M."/>
            <person name="Madera M."/>
            <person name="Marchionni L."/>
            <person name="Matsuda H."/>
            <person name="Matsuzawa S."/>
            <person name="Miki H."/>
            <person name="Mignone F."/>
            <person name="Miyake S."/>
            <person name="Morris K."/>
            <person name="Mottagui-Tabar S."/>
            <person name="Mulder N."/>
            <person name="Nakano N."/>
            <person name="Nakauchi H."/>
            <person name="Ng P."/>
            <person name="Nilsson R."/>
            <person name="Nishiguchi S."/>
            <person name="Nishikawa S."/>
            <person name="Nori F."/>
            <person name="Ohara O."/>
            <person name="Okazaki Y."/>
            <person name="Orlando V."/>
            <person name="Pang K.C."/>
            <person name="Pavan W.J."/>
            <person name="Pavesi G."/>
            <person name="Pesole G."/>
            <person name="Petrovsky N."/>
            <person name="Piazza S."/>
            <person name="Reed J."/>
            <person name="Reid J.F."/>
            <person name="Ring B.Z."/>
            <person name="Ringwald M."/>
            <person name="Rost B."/>
            <person name="Ruan Y."/>
            <person name="Salzberg S.L."/>
            <person name="Sandelin A."/>
            <person name="Schneider C."/>
            <person name="Schoenbach C."/>
            <person name="Sekiguchi K."/>
            <person name="Semple C.A."/>
            <person name="Seno S."/>
            <person name="Sessa L."/>
            <person name="Sheng Y."/>
            <person name="Shibata Y."/>
            <person name="Shimada H."/>
            <person name="Shimada K."/>
            <person name="Silva D."/>
            <person name="Sinclair B."/>
            <person name="Sperling S."/>
            <person name="Stupka E."/>
            <person name="Sugiura K."/>
            <person name="Sultana R."/>
            <person name="Takenaka Y."/>
            <person name="Taki K."/>
            <person name="Tammoja K."/>
            <person name="Tan S.L."/>
            <person name="Tang S."/>
            <person name="Taylor M.S."/>
            <person name="Tegner J."/>
            <person name="Teichmann S.A."/>
            <person name="Ueda H.R."/>
            <person name="van Nimwegen E."/>
            <person name="Verardo R."/>
            <person name="Wei C.L."/>
            <person name="Yagi K."/>
            <person name="Yamanishi H."/>
            <person name="Zabarovsky E."/>
            <person name="Zhu S."/>
            <person name="Zimmer A."/>
            <person name="Hide W."/>
            <person name="Bult C."/>
            <person name="Grimmond S.M."/>
            <person name="Teasdale R.D."/>
            <person name="Liu E.T."/>
            <person name="Brusic V."/>
            <person name="Quackenbush J."/>
            <person name="Wahlestedt C."/>
            <person name="Mattick J.S."/>
            <person name="Hume D.A."/>
            <person name="Kai C."/>
            <person name="Sasaki D."/>
            <person name="Tomaru Y."/>
            <person name="Fukuda S."/>
            <person name="Kanamori-Katayama M."/>
            <person name="Suzuki M."/>
            <person name="Aoki J."/>
            <person name="Arakawa T."/>
            <person name="Iida J."/>
            <person name="Imamura K."/>
            <person name="Itoh M."/>
            <person name="Kato T."/>
            <person name="Kawaji H."/>
            <person name="Kawagashira N."/>
            <person name="Kawashima T."/>
            <person name="Kojima M."/>
            <person name="Kondo S."/>
            <person name="Konno H."/>
            <person name="Nakano K."/>
            <person name="Ninomiya N."/>
            <person name="Nishio T."/>
            <person name="Okada M."/>
            <person name="Plessy C."/>
            <person name="Shibata K."/>
            <person name="Shiraki T."/>
            <person name="Suzuki S."/>
            <person name="Tagami M."/>
            <person name="Waki K."/>
            <person name="Watahiki A."/>
            <person name="Okamura-Oho Y."/>
            <person name="Suzuki H."/>
            <person name="Kawai J."/>
            <person name="Hayashizaki Y."/>
        </authorList>
    </citation>
    <scope>NUCLEOTIDE SEQUENCE [LARGE SCALE MRNA]</scope>
    <source>
        <strain>C57BL/6J</strain>
        <strain>NOD</strain>
        <tissue>Head</tissue>
        <tissue>Spinal cord</tissue>
    </source>
</reference>
<reference key="5">
    <citation type="submission" date="2005-07" db="EMBL/GenBank/DDBJ databases">
        <authorList>
            <person name="Mural R.J."/>
            <person name="Adams M.D."/>
            <person name="Myers E.W."/>
            <person name="Smith H.O."/>
            <person name="Venter J.C."/>
        </authorList>
    </citation>
    <scope>NUCLEOTIDE SEQUENCE [LARGE SCALE GENOMIC DNA]</scope>
</reference>
<reference key="6">
    <citation type="journal article" date="2004" name="Genome Res.">
        <title>The status, quality, and expansion of the NIH full-length cDNA project: the Mammalian Gene Collection (MGC).</title>
        <authorList>
            <consortium name="The MGC Project Team"/>
        </authorList>
    </citation>
    <scope>NUCLEOTIDE SEQUENCE [LARGE SCALE MRNA] (ISOFORMS 1 AND 2)</scope>
    <source>
        <strain>C57BL/6J</strain>
        <tissue>Embryonic germ cell</tissue>
        <tissue>Neural stem cell</tissue>
    </source>
</reference>
<reference key="7">
    <citation type="journal article" date="1987" name="Proc. Natl. Acad. Sci. U.S.A.">
        <title>Cloning and tissue-specific expression of mouse macrophage colony-stimulating factor mRNA.</title>
        <authorList>
            <person name="Rajavashisth T.B."/>
            <person name="Eng R."/>
            <person name="Shadduck R.K."/>
            <person name="Waheed A."/>
            <person name="Ben-Avram C.M."/>
            <person name="Shively J.E."/>
            <person name="Lusis A.J."/>
        </authorList>
    </citation>
    <scope>NUCLEOTIDE SEQUENCE [MRNA] OF 1-100</scope>
</reference>
<reference key="8">
    <citation type="journal article" date="1985" name="Proc. Natl. Acad. Sci. U.S.A.">
        <title>Amino-terminal amino acid sequence of murine colony-stimulating factor 1.</title>
        <authorList>
            <person name="Ben-Avram C.M."/>
            <person name="Shively J.E."/>
            <person name="Shadduck R.K."/>
            <person name="Waheed A."/>
            <person name="Rajavashisth T.B."/>
            <person name="Lusis A.J."/>
        </authorList>
    </citation>
    <scope>PROTEIN SEQUENCE OF 33-57</scope>
</reference>
<reference key="9">
    <citation type="journal article" date="1991" name="Gene">
        <title>Cloning and characterization of the murine promoter for the colony-stimulating factor-1-encoding gene.</title>
        <authorList>
            <person name="Harrington M.A."/>
            <person name="Edenberg H.J."/>
            <person name="Saxman S.M."/>
            <person name="Pedigo L.M."/>
            <person name="Daub R."/>
            <person name="Broxmeyer H.E."/>
        </authorList>
    </citation>
    <scope>NUCLEOTIDE SEQUENCE OF 1-13</scope>
</reference>
<reference key="10">
    <citation type="journal article" date="2002" name="Biochem. Biophys. Res. Commun.">
        <title>Mutation of macrophage colony stimulating factor (Csf1) causes osteopetrosis in the tl rat.</title>
        <authorList>
            <person name="Dobbins D.E."/>
            <person name="Sood R."/>
            <person name="Hashiramoto A."/>
            <person name="Hansen C.T."/>
            <person name="Wilder R.L."/>
            <person name="Remmers E.F."/>
        </authorList>
    </citation>
    <scope>SHOWS THAT SEQUENCE DESCRIBED IN PUBMED:8357831 ORIGINATES FROM MOUSE</scope>
</reference>
<reference key="11">
    <citation type="journal article" date="2002" name="Proc. Natl. Acad. Sci. U.S.A.">
        <title>The osteopetrotic mutation toothless (tl) is a loss-of-function frameshift mutation in the rat Csf1 gene: evidence of a crucial role for CSF-1 in osteoclastogenesis and endochondral ossification.</title>
        <authorList>
            <person name="Van Wesenbeeck L."/>
            <person name="Odgren P.R."/>
            <person name="MacKay C.A."/>
            <person name="D'Angelo M."/>
            <person name="Safadi F.F."/>
            <person name="Popoff S.N."/>
            <person name="Van Hul W."/>
            <person name="Marks S.C. Jr."/>
        </authorList>
    </citation>
    <scope>SHOWS THAT SEQUENCE DESCRIBED IN PUBMED:8357831 ORIGINATES FROM MOUSE</scope>
</reference>
<reference key="12">
    <citation type="journal article" date="1992" name="J. Biol. Chem.">
        <title>The predominant form of secreted colony stimulating factor-1 is a proteoglycan.</title>
        <authorList>
            <person name="Price L.K.H."/>
            <person name="Choi H.U."/>
            <person name="Rosenberg L."/>
            <person name="Stanley E.R."/>
        </authorList>
    </citation>
    <scope>GLYCOSYLATION</scope>
</reference>
<reference key="13">
    <citation type="journal article" date="1990" name="Nature">
        <title>The murine mutation osteopetrosis is in the coding region of the macrophage colony stimulating factor gene.</title>
        <authorList>
            <person name="Yoshida H."/>
            <person name="Hayashi S."/>
            <person name="Kunisada T."/>
            <person name="Ogawa M."/>
            <person name="Nishikawa S."/>
            <person name="Okamura H."/>
            <person name="Sudo T."/>
            <person name="Shultz L.D."/>
            <person name="Nishikawa S."/>
        </authorList>
    </citation>
    <scope>DISEASE</scope>
</reference>
<reference key="14">
    <citation type="journal article" date="2008" name="Proc. Natl. Acad. Sci. U.S.A.">
        <title>Structure of macrophage colony stimulating factor bound to FMS: diverse signaling assemblies of class III receptor tyrosine kinases.</title>
        <authorList>
            <person name="Chen X."/>
            <person name="Liu H."/>
            <person name="Focia P.J."/>
            <person name="Shim A.H."/>
            <person name="He X."/>
        </authorList>
    </citation>
    <scope>X-RAY CRYSTALLOGRAPHY (2.40 ANGSTROMS) OF 36-180 IN COMPLEX WITH CSF1R</scope>
    <scope>SUBUNIT</scope>
    <scope>DISULFIDE BONDS</scope>
</reference>
<organism>
    <name type="scientific">Mus musculus</name>
    <name type="common">Mouse</name>
    <dbReference type="NCBI Taxonomy" id="10090"/>
    <lineage>
        <taxon>Eukaryota</taxon>
        <taxon>Metazoa</taxon>
        <taxon>Chordata</taxon>
        <taxon>Craniata</taxon>
        <taxon>Vertebrata</taxon>
        <taxon>Euteleostomi</taxon>
        <taxon>Mammalia</taxon>
        <taxon>Eutheria</taxon>
        <taxon>Euarchontoglires</taxon>
        <taxon>Glires</taxon>
        <taxon>Rodentia</taxon>
        <taxon>Myomorpha</taxon>
        <taxon>Muroidea</taxon>
        <taxon>Muridae</taxon>
        <taxon>Murinae</taxon>
        <taxon>Mus</taxon>
        <taxon>Mus</taxon>
    </lineage>
</organism>
<comment type="function">
    <text>Cytokine that plays an essential role in the regulation of survival, proliferation and differentiation of hematopoietic precursor cells, especially mononuclear phagocytes, such as macrophages and monocytes. Promotes the release of pro-inflammatory chemokines, and thereby plays an important role in innate immunity and in inflammatory processes. Plays an important role in the regulation of osteoclast proliferation and differentiation, the regulation of bone resorption, and is required for normal bone development. Required for normal male and female fertility. Promotes reorganization of the actin cytoskeleton, regulates formation of membrane ruffles, cell adhesion and cell migration. Plays a role in lipoprotein clearance.</text>
</comment>
<comment type="subunit">
    <text evidence="2 7">Homodimer or heterodimer; disulfide-linked (PubMed:19017797). Likely to exist in multiple forms: homodimer consisting of 2 identical 150-200 kDa proteoglycan subunits, heterodimer consisting of a 150-200 kDa proteoglycan subunit and a truncated 43 kDa subunit, and homodimer consisting of 2 identical 43 kDa subunits (By similarity). Interacts with CSF1R (PubMed:19017797).</text>
</comment>
<comment type="interaction">
    <interactant intactId="EBI-777188">
        <id>P07141</id>
    </interactant>
    <interactant intactId="EBI-777252">
        <id>Q8C161</id>
        <label>Aar2</label>
    </interactant>
    <organismsDiffer>false</organismsDiffer>
    <experiments>2</experiments>
</comment>
<comment type="interaction">
    <interactant intactId="EBI-777188">
        <id>P07141</id>
    </interactant>
    <interactant intactId="EBI-309095">
        <id>Q60771</id>
        <label>Cldn11</label>
    </interactant>
    <organismsDiffer>false</organismsDiffer>
    <experiments>2</experiments>
</comment>
<comment type="interaction">
    <interactant intactId="EBI-777188">
        <id>P07141</id>
    </interactant>
    <interactant intactId="EBI-777188">
        <id>P07141</id>
        <label>Csf1</label>
    </interactant>
    <organismsDiffer>false</organismsDiffer>
    <experiments>3</experiments>
</comment>
<comment type="interaction">
    <interactant intactId="EBI-777188">
        <id>P07141</id>
    </interactant>
    <interactant intactId="EBI-6305373">
        <id>P09581</id>
        <label>Csf1r</label>
    </interactant>
    <organismsDiffer>false</organismsDiffer>
    <experiments>6</experiments>
</comment>
<comment type="interaction">
    <interactant intactId="EBI-777188">
        <id>P07141</id>
    </interactant>
    <interactant intactId="EBI-645061">
        <id>Q9JHU4</id>
        <label>Dync1h1</label>
    </interactant>
    <organismsDiffer>false</organismsDiffer>
    <experiments>2</experiments>
</comment>
<comment type="interaction">
    <interactant intactId="EBI-777188">
        <id>P07141</id>
    </interactant>
    <interactant intactId="EBI-298680">
        <id>P05480</id>
        <label>Src</label>
    </interactant>
    <organismsDiffer>false</organismsDiffer>
    <experiments>2</experiments>
</comment>
<comment type="interaction">
    <interactant intactId="EBI-777188">
        <id>P07141</id>
    </interactant>
    <interactant intactId="EBI-16007073">
        <id>P03228</id>
        <label>BARF1</label>
    </interactant>
    <organismsDiffer>true</organismsDiffer>
    <experiments>8</experiments>
</comment>
<comment type="subcellular location">
    <subcellularLocation>
        <location evidence="1">Cell membrane</location>
        <topology evidence="1">Single-pass type I membrane protein</topology>
    </subcellularLocation>
</comment>
<comment type="subcellular location">
    <molecule>Processed macrophage colony-stimulating factor 1</molecule>
    <subcellularLocation>
        <location evidence="1">Secreted</location>
        <location evidence="1">Extracellular space</location>
    </subcellularLocation>
</comment>
<comment type="alternative products">
    <event type="alternative splicing"/>
    <isoform>
        <id>P07141-1</id>
        <name>1</name>
        <sequence type="displayed"/>
    </isoform>
    <isoform>
        <id>P07141-2</id>
        <name>2</name>
        <sequence type="described" ref="VSP_001189"/>
    </isoform>
</comment>
<comment type="PTM">
    <text evidence="2">N-glycosylated.</text>
</comment>
<comment type="PTM">
    <text evidence="6">O-glycosylated; contains chondroitin sulfate.</text>
</comment>
<comment type="disease">
    <text evidence="8">A defect in Csf1 is the cause of osteopetrosis. Osteopetrotic mice (op/op) are severely deficient in mature macrophages and osteoclasts, display failed tooth eruption, and have a restricted capacity for bone remodeling.</text>
</comment>
<comment type="caution">
    <text evidence="11">The sequence reported in PubMed:8357831 was thought to originate from rat, but was later shown (PubMed:12074592, PubMed:12379742) to be derived from mouse.</text>
</comment>
<gene>
    <name type="primary">Csf1</name>
    <name type="synonym">Csfm</name>
</gene>
<keyword id="KW-0002">3D-structure</keyword>
<keyword id="KW-0025">Alternative splicing</keyword>
<keyword id="KW-1003">Cell membrane</keyword>
<keyword id="KW-0202">Cytokine</keyword>
<keyword id="KW-0903">Direct protein sequencing</keyword>
<keyword id="KW-1015">Disulfide bond</keyword>
<keyword id="KW-0325">Glycoprotein</keyword>
<keyword id="KW-0339">Growth factor</keyword>
<keyword id="KW-0391">Immunity</keyword>
<keyword id="KW-0395">Inflammatory response</keyword>
<keyword id="KW-0399">Innate immunity</keyword>
<keyword id="KW-0472">Membrane</keyword>
<keyword id="KW-0654">Proteoglycan</keyword>
<keyword id="KW-1185">Reference proteome</keyword>
<keyword id="KW-0964">Secreted</keyword>
<keyword id="KW-0732">Signal</keyword>
<keyword id="KW-0812">Transmembrane</keyword>
<keyword id="KW-1133">Transmembrane helix</keyword>
<protein>
    <recommendedName>
        <fullName>Macrophage colony-stimulating factor 1</fullName>
        <shortName>CSF-1</shortName>
        <shortName>MCSF</shortName>
    </recommendedName>
    <alternativeName>
        <fullName evidence="2">Proteoglycan macrophage colony-stimulating factor</fullName>
        <shortName evidence="2">PG-M-CSF</shortName>
    </alternativeName>
    <component>
        <recommendedName>
            <fullName>Processed macrophage colony-stimulating factor 1</fullName>
        </recommendedName>
    </component>
    <component>
        <recommendedName>
            <fullName evidence="2">Macrophage colony-stimulating factor 1 43 kDa subunit</fullName>
        </recommendedName>
    </component>
</protein>
<accession>P07141</accession>
<accession>Q3U395</accession>
<accession>Q8R3C8</accession>
<evidence type="ECO:0000250" key="1"/>
<evidence type="ECO:0000250" key="2">
    <source>
        <dbReference type="UniProtKB" id="P09603"/>
    </source>
</evidence>
<evidence type="ECO:0000250" key="3">
    <source>
        <dbReference type="UniProtKB" id="Q8JZQ0"/>
    </source>
</evidence>
<evidence type="ECO:0000255" key="4"/>
<evidence type="ECO:0000256" key="5">
    <source>
        <dbReference type="SAM" id="MobiDB-lite"/>
    </source>
</evidence>
<evidence type="ECO:0000269" key="6">
    <source>
    </source>
</evidence>
<evidence type="ECO:0000269" key="7">
    <source>
    </source>
</evidence>
<evidence type="ECO:0000269" key="8">
    <source>
    </source>
</evidence>
<evidence type="ECO:0000269" key="9">
    <source>
    </source>
</evidence>
<evidence type="ECO:0000303" key="10">
    <source>
    </source>
</evidence>
<evidence type="ECO:0000305" key="11"/>
<evidence type="ECO:0007829" key="12">
    <source>
        <dbReference type="PDB" id="3EJJ"/>
    </source>
</evidence>
<feature type="signal peptide" evidence="9">
    <location>
        <begin position="1"/>
        <end position="32"/>
    </location>
</feature>
<feature type="chain" id="PRO_0000005858" description="Macrophage colony-stimulating factor 1">
    <location>
        <begin position="33"/>
        <end position="552"/>
    </location>
</feature>
<feature type="chain" id="PRO_0000296232" description="Processed macrophage colony-stimulating factor 1" evidence="3">
    <location>
        <begin position="33"/>
        <end position="447"/>
    </location>
</feature>
<feature type="chain" id="PRO_0000457792" description="Macrophage colony-stimulating factor 1 43 kDa subunit" evidence="2">
    <location>
        <begin position="33"/>
        <end position="255"/>
    </location>
</feature>
<feature type="topological domain" description="Extracellular" evidence="4">
    <location>
        <begin position="33"/>
        <end position="492"/>
    </location>
</feature>
<feature type="transmembrane region" description="Helical" evidence="4">
    <location>
        <begin position="493"/>
        <end position="515"/>
    </location>
</feature>
<feature type="topological domain" description="Cytoplasmic" evidence="4">
    <location>
        <begin position="516"/>
        <end position="552"/>
    </location>
</feature>
<feature type="region of interest" description="Disordered" evidence="5">
    <location>
        <begin position="197"/>
        <end position="293"/>
    </location>
</feature>
<feature type="region of interest" description="Disordered" evidence="5">
    <location>
        <begin position="321"/>
        <end position="412"/>
    </location>
</feature>
<feature type="region of interest" description="Disordered" evidence="5">
    <location>
        <begin position="439"/>
        <end position="465"/>
    </location>
</feature>
<feature type="region of interest" description="Disordered" evidence="5">
    <location>
        <begin position="525"/>
        <end position="552"/>
    </location>
</feature>
<feature type="compositionally biased region" description="Low complexity" evidence="5">
    <location>
        <begin position="197"/>
        <end position="207"/>
    </location>
</feature>
<feature type="compositionally biased region" description="Polar residues" evidence="5">
    <location>
        <begin position="254"/>
        <end position="267"/>
    </location>
</feature>
<feature type="compositionally biased region" description="Basic and acidic residues" evidence="5">
    <location>
        <begin position="268"/>
        <end position="278"/>
    </location>
</feature>
<feature type="compositionally biased region" description="Basic and acidic residues" evidence="5">
    <location>
        <begin position="350"/>
        <end position="364"/>
    </location>
</feature>
<feature type="compositionally biased region" description="Basic and acidic residues" evidence="5">
    <location>
        <begin position="382"/>
        <end position="396"/>
    </location>
</feature>
<feature type="compositionally biased region" description="Basic and acidic residues" evidence="5">
    <location>
        <begin position="439"/>
        <end position="450"/>
    </location>
</feature>
<feature type="compositionally biased region" description="Basic and acidic residues" evidence="5">
    <location>
        <begin position="543"/>
        <end position="552"/>
    </location>
</feature>
<feature type="glycosylation site" description="N-linked (GlcNAc...) asparagine" evidence="4">
    <location>
        <position position="107"/>
    </location>
</feature>
<feature type="glycosylation site" description="N-linked (GlcNAc...) asparagine" evidence="4">
    <location>
        <position position="154"/>
    </location>
</feature>
<feature type="glycosylation site" description="N-linked (GlcNAc...) asparagine" evidence="4">
    <location>
        <position position="172"/>
    </location>
</feature>
<feature type="glycosylation site" description="O-linked (Xyl...) (chondroitin sulfate) serine" evidence="2">
    <location>
        <position position="308"/>
    </location>
</feature>
<feature type="glycosylation site" description="O-linked (GalNAc...) threonine" evidence="2">
    <location>
        <position position="360"/>
    </location>
</feature>
<feature type="disulfide bond" evidence="7">
    <location>
        <begin position="39"/>
        <end position="122"/>
    </location>
</feature>
<feature type="disulfide bond" description="Interchain" evidence="7">
    <location>
        <position position="63"/>
    </location>
</feature>
<feature type="disulfide bond" evidence="7">
    <location>
        <begin position="80"/>
        <end position="171"/>
    </location>
</feature>
<feature type="disulfide bond" evidence="7">
    <location>
        <begin position="134"/>
        <end position="178"/>
    </location>
</feature>
<feature type="disulfide bond" description="Interchain" evidence="1">
    <location>
        <position position="189"/>
    </location>
</feature>
<feature type="disulfide bond" description="Interchain" evidence="1">
    <location>
        <position position="191"/>
    </location>
</feature>
<feature type="splice variant" id="VSP_001189" description="In isoform 2." evidence="10">
    <location>
        <begin position="182"/>
        <end position="476"/>
    </location>
</feature>
<feature type="sequence variant">
    <original>D</original>
    <variation>G</variation>
    <location>
        <position position="292"/>
    </location>
</feature>
<feature type="sequence variant">
    <original>S</original>
    <variation>P</variation>
    <location>
        <position position="345"/>
    </location>
</feature>
<feature type="sequence conflict" description="In Ref. 7; AAA37480." evidence="11" ref="7">
    <location>
        <position position="3"/>
    </location>
</feature>
<feature type="sequence conflict" description="In Ref. 7; AAA37480." evidence="11" ref="7">
    <original>A</original>
    <variation>R</variation>
    <location>
        <position position="6"/>
    </location>
</feature>
<feature type="sequence conflict" description="In Ref. 7; AAA37480." evidence="11" ref="7">
    <original>AG</original>
    <variation>PR</variation>
    <location>
        <begin position="7"/>
        <end position="8"/>
    </location>
</feature>
<feature type="sequence conflict" description="In Ref. 1; CAA28660." evidence="11" ref="1">
    <original>P</original>
    <variation>A</variation>
    <location>
        <position position="246"/>
    </location>
</feature>
<feature type="helix" evidence="12">
    <location>
        <begin position="37"/>
        <end position="41"/>
    </location>
</feature>
<feature type="helix" evidence="12">
    <location>
        <begin position="45"/>
        <end position="55"/>
    </location>
</feature>
<feature type="strand" evidence="12">
    <location>
        <begin position="65"/>
        <end position="70"/>
    </location>
</feature>
<feature type="turn" evidence="12">
    <location>
        <begin position="72"/>
        <end position="74"/>
    </location>
</feature>
<feature type="helix" evidence="12">
    <location>
        <begin position="78"/>
        <end position="95"/>
    </location>
</feature>
<feature type="helix" evidence="12">
    <location>
        <begin position="104"/>
        <end position="118"/>
    </location>
</feature>
<feature type="helix" evidence="12">
    <location>
        <begin position="119"/>
        <end position="122"/>
    </location>
</feature>
<feature type="turn" evidence="12">
    <location>
        <begin position="131"/>
        <end position="134"/>
    </location>
</feature>
<feature type="strand" evidence="12">
    <location>
        <begin position="135"/>
        <end position="140"/>
    </location>
</feature>
<feature type="helix" evidence="12">
    <location>
        <begin position="142"/>
        <end position="162"/>
    </location>
</feature>
<feature type="turn" evidence="12">
    <location>
        <begin position="164"/>
        <end position="167"/>
    </location>
</feature>
<feature type="helix" evidence="12">
    <location>
        <begin position="172"/>
        <end position="177"/>
    </location>
</feature>
<dbReference type="EMBL" id="X05010">
    <property type="protein sequence ID" value="CAA28660.1"/>
    <property type="molecule type" value="mRNA"/>
</dbReference>
<dbReference type="EMBL" id="M21952">
    <property type="protein sequence ID" value="AAA37481.1"/>
    <property type="molecule type" value="mRNA"/>
</dbReference>
<dbReference type="EMBL" id="M21149">
    <property type="protein sequence ID" value="AAA37482.1"/>
    <property type="molecule type" value="mRNA"/>
</dbReference>
<dbReference type="EMBL" id="M84361">
    <property type="protein sequence ID" value="AAA03032.1"/>
    <property type="molecule type" value="mRNA"/>
</dbReference>
<dbReference type="EMBL" id="AK138489">
    <property type="protein sequence ID" value="BAE23681.1"/>
    <property type="molecule type" value="mRNA"/>
</dbReference>
<dbReference type="EMBL" id="AK154872">
    <property type="protein sequence ID" value="BAE32893.1"/>
    <property type="molecule type" value="mRNA"/>
</dbReference>
<dbReference type="EMBL" id="AK160995">
    <property type="protein sequence ID" value="BAE36140.1"/>
    <property type="molecule type" value="mRNA"/>
</dbReference>
<dbReference type="EMBL" id="CH466607">
    <property type="protein sequence ID" value="EDL01916.1"/>
    <property type="molecule type" value="Genomic_DNA"/>
</dbReference>
<dbReference type="EMBL" id="CH466607">
    <property type="protein sequence ID" value="EDL01919.1"/>
    <property type="molecule type" value="Genomic_DNA"/>
</dbReference>
<dbReference type="EMBL" id="BC025593">
    <property type="protein sequence ID" value="AAH25593.1"/>
    <property type="molecule type" value="mRNA"/>
</dbReference>
<dbReference type="EMBL" id="BC066187">
    <property type="protein sequence ID" value="AAH66187.1"/>
    <property type="molecule type" value="mRNA"/>
</dbReference>
<dbReference type="EMBL" id="BC066200">
    <property type="protein sequence ID" value="AAH66200.1"/>
    <property type="molecule type" value="mRNA"/>
</dbReference>
<dbReference type="EMBL" id="BC066205">
    <property type="protein sequence ID" value="AAH66205.1"/>
    <property type="molecule type" value="mRNA"/>
</dbReference>
<dbReference type="EMBL" id="M15692">
    <property type="protein sequence ID" value="AAA37480.1"/>
    <property type="molecule type" value="mRNA"/>
</dbReference>
<dbReference type="EMBL" id="M81316">
    <property type="protein sequence ID" value="AAA19866.1"/>
    <property type="molecule type" value="Unassigned_DNA"/>
</dbReference>
<dbReference type="CCDS" id="CCDS17740.1">
    <molecule id="P07141-1"/>
</dbReference>
<dbReference type="CCDS" id="CCDS51044.1">
    <molecule id="P07141-2"/>
</dbReference>
<dbReference type="PIR" id="A31401">
    <property type="entry name" value="A31401"/>
</dbReference>
<dbReference type="RefSeq" id="NP_001107001.1">
    <molecule id="P07141-2"/>
    <property type="nucleotide sequence ID" value="NM_001113529.1"/>
</dbReference>
<dbReference type="RefSeq" id="NP_001107002.1">
    <molecule id="P07141-1"/>
    <property type="nucleotide sequence ID" value="NM_001113530.1"/>
</dbReference>
<dbReference type="RefSeq" id="NP_031804.3">
    <molecule id="P07141-1"/>
    <property type="nucleotide sequence ID" value="NM_007778.4"/>
</dbReference>
<dbReference type="PDB" id="3EJJ">
    <property type="method" value="X-ray"/>
    <property type="resolution" value="2.40 A"/>
    <property type="chains" value="A/B=36-180"/>
</dbReference>
<dbReference type="PDB" id="3UF5">
    <property type="method" value="X-ray"/>
    <property type="resolution" value="2.80 A"/>
    <property type="chains" value="A/B=33-181"/>
</dbReference>
<dbReference type="PDB" id="4ADQ">
    <property type="method" value="X-ray"/>
    <property type="resolution" value="4.50 A"/>
    <property type="chains" value="E/F/G/H=33-181"/>
</dbReference>
<dbReference type="PDBsum" id="3EJJ"/>
<dbReference type="PDBsum" id="3UF5"/>
<dbReference type="PDBsum" id="4ADQ"/>
<dbReference type="SMR" id="P07141"/>
<dbReference type="BioGRID" id="198927">
    <property type="interactions" value="1"/>
</dbReference>
<dbReference type="DIP" id="DIP-45278N"/>
<dbReference type="FunCoup" id="P07141">
    <property type="interactions" value="1180"/>
</dbReference>
<dbReference type="IntAct" id="P07141">
    <property type="interactions" value="43"/>
</dbReference>
<dbReference type="STRING" id="10090.ENSMUSP00000014743"/>
<dbReference type="BindingDB" id="P07141"/>
<dbReference type="ChEMBL" id="CHEMBL3638330"/>
<dbReference type="GlyCosmos" id="P07141">
    <property type="glycosylation" value="3 sites, No reported glycans"/>
</dbReference>
<dbReference type="GlyGen" id="P07141">
    <property type="glycosylation" value="6 sites, 3 N-linked glycans (3 sites)"/>
</dbReference>
<dbReference type="iPTMnet" id="P07141"/>
<dbReference type="PhosphoSitePlus" id="P07141"/>
<dbReference type="SwissPalm" id="P07141"/>
<dbReference type="CPTAC" id="non-CPTAC-3701"/>
<dbReference type="jPOST" id="P07141"/>
<dbReference type="PaxDb" id="10090-ENSMUSP00000014743"/>
<dbReference type="PeptideAtlas" id="P07141"/>
<dbReference type="ProteomicsDB" id="285344">
    <molecule id="P07141-1"/>
</dbReference>
<dbReference type="ProteomicsDB" id="285345">
    <molecule id="P07141-2"/>
</dbReference>
<dbReference type="Pumba" id="P07141"/>
<dbReference type="Antibodypedia" id="20082">
    <property type="antibodies" value="954 antibodies from 46 providers"/>
</dbReference>
<dbReference type="DNASU" id="12977"/>
<dbReference type="Ensembl" id="ENSMUST00000014743.10">
    <molecule id="P07141-1"/>
    <property type="protein sequence ID" value="ENSMUSP00000014743.4"/>
    <property type="gene ID" value="ENSMUSG00000014599.11"/>
</dbReference>
<dbReference type="Ensembl" id="ENSMUST00000118593.8">
    <molecule id="P07141-2"/>
    <property type="protein sequence ID" value="ENSMUSP00000113136.2"/>
    <property type="gene ID" value="ENSMUSG00000014599.11"/>
</dbReference>
<dbReference type="Ensembl" id="ENSMUST00000120243.8">
    <molecule id="P07141-1"/>
    <property type="protein sequence ID" value="ENSMUSP00000113617.2"/>
    <property type="gene ID" value="ENSMUSG00000014599.11"/>
</dbReference>
<dbReference type="GeneID" id="12977"/>
<dbReference type="KEGG" id="mmu:12977"/>
<dbReference type="UCSC" id="uc008qxk.2">
    <molecule id="P07141-1"/>
    <property type="organism name" value="mouse"/>
</dbReference>
<dbReference type="UCSC" id="uc008qxl.2">
    <molecule id="P07141-2"/>
    <property type="organism name" value="mouse"/>
</dbReference>
<dbReference type="AGR" id="MGI:1339753"/>
<dbReference type="CTD" id="1435"/>
<dbReference type="MGI" id="MGI:1339753">
    <property type="gene designation" value="Csf1"/>
</dbReference>
<dbReference type="VEuPathDB" id="HostDB:ENSMUSG00000014599"/>
<dbReference type="eggNOG" id="ENOG502S271">
    <property type="taxonomic scope" value="Eukaryota"/>
</dbReference>
<dbReference type="GeneTree" id="ENSGT00390000015805"/>
<dbReference type="HOGENOM" id="CLU_095000_0_0_1"/>
<dbReference type="InParanoid" id="P07141"/>
<dbReference type="OMA" id="CQIAYEF"/>
<dbReference type="OrthoDB" id="8702024at2759"/>
<dbReference type="PhylomeDB" id="P07141"/>
<dbReference type="TreeFam" id="TF337718"/>
<dbReference type="Reactome" id="R-MMU-381426">
    <property type="pathway name" value="Regulation of Insulin-like Growth Factor (IGF) transport and uptake by Insulin-like Growth Factor Binding Proteins (IGFBPs)"/>
</dbReference>
<dbReference type="Reactome" id="R-MMU-449836">
    <property type="pathway name" value="Other interleukin signaling"/>
</dbReference>
<dbReference type="Reactome" id="R-MMU-8957275">
    <property type="pathway name" value="Post-translational protein phosphorylation"/>
</dbReference>
<dbReference type="Reactome" id="R-MMU-9856649">
    <property type="pathway name" value="Transcriptional and post-translational regulation of MITF-M expression and activity"/>
</dbReference>
<dbReference type="BioGRID-ORCS" id="12977">
    <property type="hits" value="2 hits in 76 CRISPR screens"/>
</dbReference>
<dbReference type="EvolutionaryTrace" id="P07141"/>
<dbReference type="PRO" id="PR:P07141"/>
<dbReference type="Proteomes" id="UP000000589">
    <property type="component" value="Chromosome 3"/>
</dbReference>
<dbReference type="RNAct" id="P07141">
    <property type="molecule type" value="protein"/>
</dbReference>
<dbReference type="Bgee" id="ENSMUSG00000014599">
    <property type="expression patterns" value="Expressed in stroma of bone marrow and 238 other cell types or tissues"/>
</dbReference>
<dbReference type="ExpressionAtlas" id="P07141">
    <property type="expression patterns" value="baseline and differential"/>
</dbReference>
<dbReference type="GO" id="GO:1990682">
    <property type="term" value="C:CSF1-CSF1R complex"/>
    <property type="evidence" value="ECO:0000314"/>
    <property type="project" value="BHF-UCL"/>
</dbReference>
<dbReference type="GO" id="GO:0005576">
    <property type="term" value="C:extracellular region"/>
    <property type="evidence" value="ECO:0000304"/>
    <property type="project" value="Reactome"/>
</dbReference>
<dbReference type="GO" id="GO:0005615">
    <property type="term" value="C:extracellular space"/>
    <property type="evidence" value="ECO:0007005"/>
    <property type="project" value="BHF-UCL"/>
</dbReference>
<dbReference type="GO" id="GO:0016604">
    <property type="term" value="C:nuclear body"/>
    <property type="evidence" value="ECO:0007669"/>
    <property type="project" value="Ensembl"/>
</dbReference>
<dbReference type="GO" id="GO:0048471">
    <property type="term" value="C:perinuclear region of cytoplasm"/>
    <property type="evidence" value="ECO:0007669"/>
    <property type="project" value="Ensembl"/>
</dbReference>
<dbReference type="GO" id="GO:0005886">
    <property type="term" value="C:plasma membrane"/>
    <property type="evidence" value="ECO:0007669"/>
    <property type="project" value="UniProtKB-SubCell"/>
</dbReference>
<dbReference type="GO" id="GO:0005125">
    <property type="term" value="F:cytokine activity"/>
    <property type="evidence" value="ECO:0000266"/>
    <property type="project" value="MGI"/>
</dbReference>
<dbReference type="GO" id="GO:0008083">
    <property type="term" value="F:growth factor activity"/>
    <property type="evidence" value="ECO:0007669"/>
    <property type="project" value="UniProtKB-KW"/>
</dbReference>
<dbReference type="GO" id="GO:0042802">
    <property type="term" value="F:identical protein binding"/>
    <property type="evidence" value="ECO:0000353"/>
    <property type="project" value="IntAct"/>
</dbReference>
<dbReference type="GO" id="GO:0005157">
    <property type="term" value="F:macrophage colony-stimulating factor receptor binding"/>
    <property type="evidence" value="ECO:0000353"/>
    <property type="project" value="BHF-UCL"/>
</dbReference>
<dbReference type="GO" id="GO:0042803">
    <property type="term" value="F:protein homodimerization activity"/>
    <property type="evidence" value="ECO:0000353"/>
    <property type="project" value="BHF-UCL"/>
</dbReference>
<dbReference type="GO" id="GO:0060444">
    <property type="term" value="P:branching involved in mammary gland duct morphogenesis"/>
    <property type="evidence" value="ECO:0000315"/>
    <property type="project" value="MGI"/>
</dbReference>
<dbReference type="GO" id="GO:0007169">
    <property type="term" value="P:cell surface receptor protein tyrosine kinase signaling pathway"/>
    <property type="evidence" value="ECO:0007669"/>
    <property type="project" value="Ensembl"/>
</dbReference>
<dbReference type="GO" id="GO:0003006">
    <property type="term" value="P:developmental process involved in reproduction"/>
    <property type="evidence" value="ECO:0000315"/>
    <property type="project" value="BHF-UCL"/>
</dbReference>
<dbReference type="GO" id="GO:0048873">
    <property type="term" value="P:homeostasis of number of cells within a tissue"/>
    <property type="evidence" value="ECO:0000315"/>
    <property type="project" value="MGI"/>
</dbReference>
<dbReference type="GO" id="GO:0006954">
    <property type="term" value="P:inflammatory response"/>
    <property type="evidence" value="ECO:0007669"/>
    <property type="project" value="UniProtKB-KW"/>
</dbReference>
<dbReference type="GO" id="GO:0045087">
    <property type="term" value="P:innate immune response"/>
    <property type="evidence" value="ECO:0007669"/>
    <property type="project" value="UniProtKB-KW"/>
</dbReference>
<dbReference type="GO" id="GO:0038145">
    <property type="term" value="P:macrophage colony-stimulating factor signaling pathway"/>
    <property type="evidence" value="ECO:0000314"/>
    <property type="project" value="BHF-UCL"/>
</dbReference>
<dbReference type="GO" id="GO:0030225">
    <property type="term" value="P:macrophage differentiation"/>
    <property type="evidence" value="ECO:0000315"/>
    <property type="project" value="MGI"/>
</dbReference>
<dbReference type="GO" id="GO:0061519">
    <property type="term" value="P:macrophage homeostasis"/>
    <property type="evidence" value="ECO:0000315"/>
    <property type="project" value="MGI"/>
</dbReference>
<dbReference type="GO" id="GO:0060763">
    <property type="term" value="P:mammary duct terminal end bud growth"/>
    <property type="evidence" value="ECO:0000315"/>
    <property type="project" value="MGI"/>
</dbReference>
<dbReference type="GO" id="GO:0060611">
    <property type="term" value="P:mammary gland fat development"/>
    <property type="evidence" value="ECO:0000315"/>
    <property type="project" value="MGI"/>
</dbReference>
<dbReference type="GO" id="GO:0061518">
    <property type="term" value="P:microglial cell proliferation"/>
    <property type="evidence" value="ECO:0000316"/>
    <property type="project" value="ARUK-UCL"/>
</dbReference>
<dbReference type="GO" id="GO:0030224">
    <property type="term" value="P:monocyte differentiation"/>
    <property type="evidence" value="ECO:0000315"/>
    <property type="project" value="MGI"/>
</dbReference>
<dbReference type="GO" id="GO:0035702">
    <property type="term" value="P:monocyte homeostasis"/>
    <property type="evidence" value="ECO:0000315"/>
    <property type="project" value="MGI"/>
</dbReference>
<dbReference type="GO" id="GO:0097529">
    <property type="term" value="P:myeloid leukocyte migration"/>
    <property type="evidence" value="ECO:0000316"/>
    <property type="project" value="MGI"/>
</dbReference>
<dbReference type="GO" id="GO:0001780">
    <property type="term" value="P:neutrophil homeostasis"/>
    <property type="evidence" value="ECO:0000315"/>
    <property type="project" value="MGI"/>
</dbReference>
<dbReference type="GO" id="GO:0030316">
    <property type="term" value="P:osteoclast differentiation"/>
    <property type="evidence" value="ECO:0000314"/>
    <property type="project" value="MGI"/>
</dbReference>
<dbReference type="GO" id="GO:0002158">
    <property type="term" value="P:osteoclast proliferation"/>
    <property type="evidence" value="ECO:0000314"/>
    <property type="project" value="MGI"/>
</dbReference>
<dbReference type="GO" id="GO:0008284">
    <property type="term" value="P:positive regulation of cell population proliferation"/>
    <property type="evidence" value="ECO:0000266"/>
    <property type="project" value="MGI"/>
</dbReference>
<dbReference type="GO" id="GO:0001954">
    <property type="term" value="P:positive regulation of cell-matrix adhesion"/>
    <property type="evidence" value="ECO:0000316"/>
    <property type="project" value="MGI"/>
</dbReference>
<dbReference type="GO" id="GO:0010628">
    <property type="term" value="P:positive regulation of gene expression"/>
    <property type="evidence" value="ECO:0000314"/>
    <property type="project" value="ARUK-UCL"/>
</dbReference>
<dbReference type="GO" id="GO:0002687">
    <property type="term" value="P:positive regulation of leukocyte migration"/>
    <property type="evidence" value="ECO:0000316"/>
    <property type="project" value="MGI"/>
</dbReference>
<dbReference type="GO" id="GO:0010759">
    <property type="term" value="P:positive regulation of macrophage chemotaxis"/>
    <property type="evidence" value="ECO:0007669"/>
    <property type="project" value="Ensembl"/>
</dbReference>
<dbReference type="GO" id="GO:1902228">
    <property type="term" value="P:positive regulation of macrophage colony-stimulating factor signaling pathway"/>
    <property type="evidence" value="ECO:0007669"/>
    <property type="project" value="Ensembl"/>
</dbReference>
<dbReference type="GO" id="GO:0010744">
    <property type="term" value="P:positive regulation of macrophage derived foam cell differentiation"/>
    <property type="evidence" value="ECO:0007669"/>
    <property type="project" value="Ensembl"/>
</dbReference>
<dbReference type="GO" id="GO:0045651">
    <property type="term" value="P:positive regulation of macrophage differentiation"/>
    <property type="evidence" value="ECO:0000315"/>
    <property type="project" value="MGI"/>
</dbReference>
<dbReference type="GO" id="GO:1904141">
    <property type="term" value="P:positive regulation of microglial cell migration"/>
    <property type="evidence" value="ECO:0007669"/>
    <property type="project" value="Ensembl"/>
</dbReference>
<dbReference type="GO" id="GO:0045657">
    <property type="term" value="P:positive regulation of monocyte differentiation"/>
    <property type="evidence" value="ECO:0000315"/>
    <property type="project" value="MGI"/>
</dbReference>
<dbReference type="GO" id="GO:0032946">
    <property type="term" value="P:positive regulation of mononuclear cell proliferation"/>
    <property type="evidence" value="ECO:0007669"/>
    <property type="project" value="Ensembl"/>
</dbReference>
<dbReference type="GO" id="GO:0040018">
    <property type="term" value="P:positive regulation of multicellular organism growth"/>
    <property type="evidence" value="ECO:0000315"/>
    <property type="project" value="MGI"/>
</dbReference>
<dbReference type="GO" id="GO:0042488">
    <property type="term" value="P:positive regulation of odontogenesis of dentin-containing tooth"/>
    <property type="evidence" value="ECO:0000315"/>
    <property type="project" value="MGI"/>
</dbReference>
<dbReference type="GO" id="GO:0045672">
    <property type="term" value="P:positive regulation of osteoclast differentiation"/>
    <property type="evidence" value="ECO:0000314"/>
    <property type="project" value="MGI"/>
</dbReference>
<dbReference type="GO" id="GO:0051247">
    <property type="term" value="P:positive regulation of protein metabolic process"/>
    <property type="evidence" value="ECO:0007669"/>
    <property type="project" value="Ensembl"/>
</dbReference>
<dbReference type="GO" id="GO:0046579">
    <property type="term" value="P:positive regulation of Ras protein signal transduction"/>
    <property type="evidence" value="ECO:0000314"/>
    <property type="project" value="MGI"/>
</dbReference>
<dbReference type="GO" id="GO:0007265">
    <property type="term" value="P:Ras protein signal transduction"/>
    <property type="evidence" value="ECO:0000314"/>
    <property type="project" value="MGI"/>
</dbReference>
<dbReference type="GO" id="GO:0030278">
    <property type="term" value="P:regulation of ossification"/>
    <property type="evidence" value="ECO:0000315"/>
    <property type="project" value="MGI"/>
</dbReference>
<dbReference type="GO" id="GO:0002931">
    <property type="term" value="P:response to ischemia"/>
    <property type="evidence" value="ECO:0007669"/>
    <property type="project" value="Ensembl"/>
</dbReference>
<dbReference type="FunFam" id="1.20.1250.10:FF:000010">
    <property type="entry name" value="Macrophage colony-stimulating factor 1"/>
    <property type="match status" value="1"/>
</dbReference>
<dbReference type="Gene3D" id="1.20.1250.10">
    <property type="match status" value="1"/>
</dbReference>
<dbReference type="InterPro" id="IPR009079">
    <property type="entry name" value="4_helix_cytokine-like_core"/>
</dbReference>
<dbReference type="InterPro" id="IPR008001">
    <property type="entry name" value="MCSF-1"/>
</dbReference>
<dbReference type="PANTHER" id="PTHR10058">
    <property type="entry name" value="MACROPHAGE COLONY STIMULATING FACTOR"/>
    <property type="match status" value="1"/>
</dbReference>
<dbReference type="PANTHER" id="PTHR10058:SF0">
    <property type="entry name" value="MACROPHAGE COLONY-STIMULATING FACTOR 1"/>
    <property type="match status" value="1"/>
</dbReference>
<dbReference type="Pfam" id="PF05337">
    <property type="entry name" value="CSF-1"/>
    <property type="match status" value="1"/>
</dbReference>
<dbReference type="PIRSF" id="PIRSF001948">
    <property type="entry name" value="MCSF-1"/>
    <property type="match status" value="1"/>
</dbReference>
<dbReference type="SUPFAM" id="SSF47266">
    <property type="entry name" value="4-helical cytokines"/>
    <property type="match status" value="1"/>
</dbReference>